<keyword id="KW-0256">Endoplasmic reticulum</keyword>
<keyword id="KW-0472">Membrane</keyword>
<keyword id="KW-0479">Metal-binding</keyword>
<keyword id="KW-1185">Reference proteome</keyword>
<keyword id="KW-0808">Transferase</keyword>
<keyword id="KW-0812">Transmembrane</keyword>
<keyword id="KW-1133">Transmembrane helix</keyword>
<keyword id="KW-0833">Ubl conjugation pathway</keyword>
<keyword id="KW-0834">Unfolded protein response</keyword>
<keyword id="KW-0862">Zinc</keyword>
<keyword id="KW-0863">Zinc-finger</keyword>
<gene>
    <name type="primary">tmem129</name>
</gene>
<reference key="1">
    <citation type="submission" date="2006-08" db="EMBL/GenBank/DDBJ databases">
        <authorList>
            <consortium name="NIH - Xenopus Gene Collection (XGC) project"/>
        </authorList>
    </citation>
    <scope>NUCLEOTIDE SEQUENCE [LARGE SCALE MRNA]</scope>
    <source>
        <tissue>Testis</tissue>
    </source>
</reference>
<sequence length="362" mass="41137">MESPEVTFTLAYVVFSVCFVFTPNEFHSAGITVQNLLSGWLGSEDVAFVHYHIRRSTATLLTHSLLPMGYFIGMCFAAPEKELYNVYKAADGWKVFVLITVLLPVTTSILAFYWSQKRWGNHPLAKTLAHHALPQSSWRAVASSINTEFRRIDKFATGAPSARVIVTDTWVMKVTTYRVDVAQQQDIHLTVTDSRQHELSPDSNTPVQFITIRVASVNPRVKPFDIRLNSTEYGELREKLHAPIRNAANVVIHQTLSDMFLETFKSLVEANQVYELSSNQELEPCIGCMQTNANIKLVKYCQEANEGECQQCYCRPMWCLTCMGKWFASRQDQQHPETWLSSHVPCPTCRAKFCIVDVCIVR</sequence>
<dbReference type="EC" id="2.3.2.27"/>
<dbReference type="EMBL" id="BC121210">
    <property type="protein sequence ID" value="AAI21211.1"/>
    <property type="molecule type" value="mRNA"/>
</dbReference>
<dbReference type="RefSeq" id="NP_001016117.2">
    <property type="nucleotide sequence ID" value="NM_001016117.3"/>
</dbReference>
<dbReference type="FunCoup" id="Q0IJ33">
    <property type="interactions" value="1720"/>
</dbReference>
<dbReference type="STRING" id="8364.ENSXETP00000049741"/>
<dbReference type="PaxDb" id="8364-ENSXETP00000008404"/>
<dbReference type="DNASU" id="548871"/>
<dbReference type="GeneID" id="548871"/>
<dbReference type="KEGG" id="xtr:548871"/>
<dbReference type="AGR" id="Xenbase:XB-GENE-5934178"/>
<dbReference type="CTD" id="92305"/>
<dbReference type="Xenbase" id="XB-GENE-5934178">
    <property type="gene designation" value="tmem129"/>
</dbReference>
<dbReference type="eggNOG" id="KOG3899">
    <property type="taxonomic scope" value="Eukaryota"/>
</dbReference>
<dbReference type="HOGENOM" id="CLU_048119_1_0_1"/>
<dbReference type="InParanoid" id="Q0IJ33"/>
<dbReference type="OMA" id="KFATGPP"/>
<dbReference type="OrthoDB" id="10055027at2759"/>
<dbReference type="PhylomeDB" id="Q0IJ33"/>
<dbReference type="TreeFam" id="TF314487"/>
<dbReference type="UniPathway" id="UPA00143"/>
<dbReference type="Proteomes" id="UP000008143">
    <property type="component" value="Chromosome 1"/>
</dbReference>
<dbReference type="Bgee" id="ENSXETG00000003875">
    <property type="expression patterns" value="Expressed in egg cell and 14 other cell types or tissues"/>
</dbReference>
<dbReference type="GO" id="GO:0005789">
    <property type="term" value="C:endoplasmic reticulum membrane"/>
    <property type="evidence" value="ECO:0007669"/>
    <property type="project" value="UniProtKB-SubCell"/>
</dbReference>
<dbReference type="GO" id="GO:0061630">
    <property type="term" value="F:ubiquitin protein ligase activity"/>
    <property type="evidence" value="ECO:0007669"/>
    <property type="project" value="InterPro"/>
</dbReference>
<dbReference type="GO" id="GO:0008270">
    <property type="term" value="F:zinc ion binding"/>
    <property type="evidence" value="ECO:0007669"/>
    <property type="project" value="UniProtKB-KW"/>
</dbReference>
<dbReference type="GO" id="GO:0016567">
    <property type="term" value="P:protein ubiquitination"/>
    <property type="evidence" value="ECO:0007669"/>
    <property type="project" value="UniProtKB-UniPathway"/>
</dbReference>
<dbReference type="GO" id="GO:0006986">
    <property type="term" value="P:response to unfolded protein"/>
    <property type="evidence" value="ECO:0007669"/>
    <property type="project" value="UniProtKB-KW"/>
</dbReference>
<dbReference type="InterPro" id="IPR018801">
    <property type="entry name" value="TM129"/>
</dbReference>
<dbReference type="PANTHER" id="PTHR31322">
    <property type="entry name" value="E3 UBIQUITIN-PROTEIN LIGASE TM129"/>
    <property type="match status" value="1"/>
</dbReference>
<dbReference type="PANTHER" id="PTHR31322:SF2">
    <property type="entry name" value="E3 UBIQUITIN-PROTEIN LIGASE TM129"/>
    <property type="match status" value="1"/>
</dbReference>
<dbReference type="Pfam" id="PF10272">
    <property type="entry name" value="Tmpp129"/>
    <property type="match status" value="1"/>
</dbReference>
<name>TM129_XENTR</name>
<accession>Q0IJ33</accession>
<proteinExistence type="evidence at transcript level"/>
<protein>
    <recommendedName>
        <fullName>E3 ubiquitin-protein ligase TM129</fullName>
        <ecNumber>2.3.2.27</ecNumber>
    </recommendedName>
    <alternativeName>
        <fullName evidence="3">RING-type E3 ubiquitin transferase TM129</fullName>
    </alternativeName>
</protein>
<organism>
    <name type="scientific">Xenopus tropicalis</name>
    <name type="common">Western clawed frog</name>
    <name type="synonym">Silurana tropicalis</name>
    <dbReference type="NCBI Taxonomy" id="8364"/>
    <lineage>
        <taxon>Eukaryota</taxon>
        <taxon>Metazoa</taxon>
        <taxon>Chordata</taxon>
        <taxon>Craniata</taxon>
        <taxon>Vertebrata</taxon>
        <taxon>Euteleostomi</taxon>
        <taxon>Amphibia</taxon>
        <taxon>Batrachia</taxon>
        <taxon>Anura</taxon>
        <taxon>Pipoidea</taxon>
        <taxon>Pipidae</taxon>
        <taxon>Xenopodinae</taxon>
        <taxon>Xenopus</taxon>
        <taxon>Silurana</taxon>
    </lineage>
</organism>
<evidence type="ECO:0000250" key="1">
    <source>
        <dbReference type="UniProtKB" id="A0AVI4"/>
    </source>
</evidence>
<evidence type="ECO:0000255" key="2"/>
<evidence type="ECO:0000305" key="3"/>
<feature type="chain" id="PRO_0000291046" description="E3 ubiquitin-protein ligase TM129">
    <location>
        <begin position="1"/>
        <end position="362"/>
    </location>
</feature>
<feature type="topological domain" description="Lumenal" evidence="2">
    <location>
        <begin position="1"/>
        <end position="6"/>
    </location>
</feature>
<feature type="transmembrane region" description="Helical" evidence="2">
    <location>
        <begin position="7"/>
        <end position="27"/>
    </location>
</feature>
<feature type="topological domain" description="Cytoplasmic" evidence="2">
    <location>
        <begin position="28"/>
        <end position="56"/>
    </location>
</feature>
<feature type="transmembrane region" description="Helical" evidence="2">
    <location>
        <begin position="57"/>
        <end position="77"/>
    </location>
</feature>
<feature type="topological domain" description="Lumenal" evidence="2">
    <location>
        <begin position="78"/>
        <end position="94"/>
    </location>
</feature>
<feature type="transmembrane region" description="Helical" evidence="2">
    <location>
        <begin position="95"/>
        <end position="115"/>
    </location>
</feature>
<feature type="topological domain" description="Cytoplasmic" evidence="2">
    <location>
        <begin position="116"/>
        <end position="362"/>
    </location>
</feature>
<feature type="zinc finger region" description="RING-type; degenerate">
    <location>
        <begin position="285"/>
        <end position="350"/>
    </location>
</feature>
<comment type="function">
    <text evidence="1">E3 ubiquitin-protein ligase involved in ER-associated protein degradation, preferentially associates with the E2 enzyme UBE2J2.</text>
</comment>
<comment type="catalytic activity">
    <reaction>
        <text>S-ubiquitinyl-[E2 ubiquitin-conjugating enzyme]-L-cysteine + [acceptor protein]-L-lysine = [E2 ubiquitin-conjugating enzyme]-L-cysteine + N(6)-ubiquitinyl-[acceptor protein]-L-lysine.</text>
        <dbReference type="EC" id="2.3.2.27"/>
    </reaction>
</comment>
<comment type="pathway">
    <text>Protein modification; protein ubiquitination.</text>
</comment>
<comment type="subunit">
    <text evidence="1">Integral component of ER-resident dislocation complexes.</text>
</comment>
<comment type="subcellular location">
    <subcellularLocation>
        <location evidence="1">Endoplasmic reticulum membrane</location>
        <topology evidence="1">Multi-pass membrane protein</topology>
    </subcellularLocation>
</comment>
<comment type="domain">
    <text evidence="1">The RING-type zinc finger domain is responsible for E3 ubiquitin ligase activity.</text>
</comment>
<comment type="similarity">
    <text evidence="3">Belongs to the TMEM129 family.</text>
</comment>